<evidence type="ECO:0000255" key="1">
    <source>
        <dbReference type="HAMAP-Rule" id="MF_01395"/>
    </source>
</evidence>
<evidence type="ECO:0000255" key="2">
    <source>
        <dbReference type="PROSITE-ProRule" id="PRU01136"/>
    </source>
</evidence>
<reference key="1">
    <citation type="journal article" date="2001" name="J. Bacteriol.">
        <title>Genome sequence and comparative analysis of the solvent-producing bacterium Clostridium acetobutylicum.</title>
        <authorList>
            <person name="Noelling J."/>
            <person name="Breton G."/>
            <person name="Omelchenko M.V."/>
            <person name="Makarova K.S."/>
            <person name="Zeng Q."/>
            <person name="Gibson R."/>
            <person name="Lee H.M."/>
            <person name="Dubois J."/>
            <person name="Qiu D."/>
            <person name="Hitti J."/>
            <person name="Wolf Y.I."/>
            <person name="Tatusov R.L."/>
            <person name="Sabathe F."/>
            <person name="Doucette-Stamm L.A."/>
            <person name="Soucaille P."/>
            <person name="Daly M.J."/>
            <person name="Bennett G.N."/>
            <person name="Koonin E.V."/>
            <person name="Smith D.R."/>
        </authorList>
    </citation>
    <scope>NUCLEOTIDE SEQUENCE [LARGE SCALE GENOMIC DNA]</scope>
    <source>
        <strain>ATCC 824 / DSM 792 / JCM 1419 / IAM 19013 / LMG 5710 / NBRC 13948 / NRRL B-527 / VKM B-1787 / 2291 / W</strain>
    </source>
</reference>
<comment type="function">
    <text evidence="1">Component of the acetyl coenzyme A carboxylase (ACC) complex. Biotin carboxylase (BC) catalyzes the carboxylation of biotin on its carrier protein (BCCP) and then the CO(2) group is transferred by the transcarboxylase to acetyl-CoA to form malonyl-CoA.</text>
</comment>
<comment type="catalytic activity">
    <reaction evidence="1">
        <text>N(6)-carboxybiotinyl-L-lysyl-[protein] + acetyl-CoA = N(6)-biotinyl-L-lysyl-[protein] + malonyl-CoA</text>
        <dbReference type="Rhea" id="RHEA:54728"/>
        <dbReference type="Rhea" id="RHEA-COMP:10505"/>
        <dbReference type="Rhea" id="RHEA-COMP:10506"/>
        <dbReference type="ChEBI" id="CHEBI:57288"/>
        <dbReference type="ChEBI" id="CHEBI:57384"/>
        <dbReference type="ChEBI" id="CHEBI:83144"/>
        <dbReference type="ChEBI" id="CHEBI:83145"/>
        <dbReference type="EC" id="2.1.3.15"/>
    </reaction>
</comment>
<comment type="cofactor">
    <cofactor evidence="1">
        <name>Zn(2+)</name>
        <dbReference type="ChEBI" id="CHEBI:29105"/>
    </cofactor>
    <text evidence="1">Binds 1 zinc ion per subunit.</text>
</comment>
<comment type="pathway">
    <text evidence="1">Lipid metabolism; malonyl-CoA biosynthesis; malonyl-CoA from acetyl-CoA: step 1/1.</text>
</comment>
<comment type="subunit">
    <text evidence="1">Acetyl-CoA carboxylase is a heterohexamer composed of biotin carboxyl carrier protein (AccB), biotin carboxylase (AccC) and two subunits each of ACCase subunit alpha (AccA) and ACCase subunit beta (AccD).</text>
</comment>
<comment type="subcellular location">
    <subcellularLocation>
        <location evidence="1">Cytoplasm</location>
    </subcellularLocation>
</comment>
<comment type="similarity">
    <text evidence="1">Belongs to the AccD/PCCB family.</text>
</comment>
<accession>Q97DB1</accession>
<keyword id="KW-0067">ATP-binding</keyword>
<keyword id="KW-0963">Cytoplasm</keyword>
<keyword id="KW-0275">Fatty acid biosynthesis</keyword>
<keyword id="KW-0276">Fatty acid metabolism</keyword>
<keyword id="KW-0444">Lipid biosynthesis</keyword>
<keyword id="KW-0443">Lipid metabolism</keyword>
<keyword id="KW-0479">Metal-binding</keyword>
<keyword id="KW-0547">Nucleotide-binding</keyword>
<keyword id="KW-1185">Reference proteome</keyword>
<keyword id="KW-0808">Transferase</keyword>
<keyword id="KW-0862">Zinc</keyword>
<keyword id="KW-0863">Zinc-finger</keyword>
<feature type="chain" id="PRO_0000358965" description="Acetyl-coenzyme A carboxylase carboxyl transferase subunit beta">
    <location>
        <begin position="1"/>
        <end position="285"/>
    </location>
</feature>
<feature type="domain" description="CoA carboxyltransferase N-terminal" evidence="2">
    <location>
        <begin position="33"/>
        <end position="285"/>
    </location>
</feature>
<feature type="zinc finger region" description="C4-type" evidence="1">
    <location>
        <begin position="37"/>
        <end position="59"/>
    </location>
</feature>
<feature type="binding site" evidence="1">
    <location>
        <position position="37"/>
    </location>
    <ligand>
        <name>Zn(2+)</name>
        <dbReference type="ChEBI" id="CHEBI:29105"/>
    </ligand>
</feature>
<feature type="binding site" evidence="1">
    <location>
        <position position="40"/>
    </location>
    <ligand>
        <name>Zn(2+)</name>
        <dbReference type="ChEBI" id="CHEBI:29105"/>
    </ligand>
</feature>
<feature type="binding site" evidence="1">
    <location>
        <position position="56"/>
    </location>
    <ligand>
        <name>Zn(2+)</name>
        <dbReference type="ChEBI" id="CHEBI:29105"/>
    </ligand>
</feature>
<feature type="binding site" evidence="1">
    <location>
        <position position="59"/>
    </location>
    <ligand>
        <name>Zn(2+)</name>
        <dbReference type="ChEBI" id="CHEBI:29105"/>
    </ligand>
</feature>
<protein>
    <recommendedName>
        <fullName evidence="1">Acetyl-coenzyme A carboxylase carboxyl transferase subunit beta</fullName>
        <shortName evidence="1">ACCase subunit beta</shortName>
        <shortName evidence="1">Acetyl-CoA carboxylase carboxyltransferase subunit beta</shortName>
        <ecNumber evidence="1">2.1.3.15</ecNumber>
    </recommendedName>
</protein>
<dbReference type="EC" id="2.1.3.15" evidence="1"/>
<dbReference type="EMBL" id="AE001437">
    <property type="protein sequence ID" value="AAK81492.1"/>
    <property type="molecule type" value="Genomic_DNA"/>
</dbReference>
<dbReference type="PIR" id="A97338">
    <property type="entry name" value="A97338"/>
</dbReference>
<dbReference type="RefSeq" id="NP_350152.1">
    <property type="nucleotide sequence ID" value="NC_003030.1"/>
</dbReference>
<dbReference type="RefSeq" id="WP_010966832.1">
    <property type="nucleotide sequence ID" value="NC_003030.1"/>
</dbReference>
<dbReference type="SMR" id="Q97DB1"/>
<dbReference type="STRING" id="272562.CA_C3569"/>
<dbReference type="GeneID" id="45000059"/>
<dbReference type="KEGG" id="cac:CA_C3569"/>
<dbReference type="PATRIC" id="fig|272562.8.peg.3758"/>
<dbReference type="eggNOG" id="COG0777">
    <property type="taxonomic scope" value="Bacteria"/>
</dbReference>
<dbReference type="HOGENOM" id="CLU_015486_1_1_9"/>
<dbReference type="OrthoDB" id="9772975at2"/>
<dbReference type="UniPathway" id="UPA00655">
    <property type="reaction ID" value="UER00711"/>
</dbReference>
<dbReference type="Proteomes" id="UP000000814">
    <property type="component" value="Chromosome"/>
</dbReference>
<dbReference type="GO" id="GO:0009317">
    <property type="term" value="C:acetyl-CoA carboxylase complex"/>
    <property type="evidence" value="ECO:0007669"/>
    <property type="project" value="InterPro"/>
</dbReference>
<dbReference type="GO" id="GO:0003989">
    <property type="term" value="F:acetyl-CoA carboxylase activity"/>
    <property type="evidence" value="ECO:0007669"/>
    <property type="project" value="InterPro"/>
</dbReference>
<dbReference type="GO" id="GO:0005524">
    <property type="term" value="F:ATP binding"/>
    <property type="evidence" value="ECO:0007669"/>
    <property type="project" value="UniProtKB-KW"/>
</dbReference>
<dbReference type="GO" id="GO:0016743">
    <property type="term" value="F:carboxyl- or carbamoyltransferase activity"/>
    <property type="evidence" value="ECO:0007669"/>
    <property type="project" value="UniProtKB-UniRule"/>
</dbReference>
<dbReference type="GO" id="GO:0008270">
    <property type="term" value="F:zinc ion binding"/>
    <property type="evidence" value="ECO:0007669"/>
    <property type="project" value="UniProtKB-UniRule"/>
</dbReference>
<dbReference type="GO" id="GO:0006633">
    <property type="term" value="P:fatty acid biosynthetic process"/>
    <property type="evidence" value="ECO:0007669"/>
    <property type="project" value="UniProtKB-KW"/>
</dbReference>
<dbReference type="GO" id="GO:2001295">
    <property type="term" value="P:malonyl-CoA biosynthetic process"/>
    <property type="evidence" value="ECO:0007669"/>
    <property type="project" value="UniProtKB-UniRule"/>
</dbReference>
<dbReference type="Gene3D" id="3.90.226.10">
    <property type="entry name" value="2-enoyl-CoA Hydratase, Chain A, domain 1"/>
    <property type="match status" value="1"/>
</dbReference>
<dbReference type="HAMAP" id="MF_01395">
    <property type="entry name" value="AcetylCoA_CT_beta"/>
    <property type="match status" value="1"/>
</dbReference>
<dbReference type="InterPro" id="IPR034733">
    <property type="entry name" value="AcCoA_carboxyl_beta"/>
</dbReference>
<dbReference type="InterPro" id="IPR000438">
    <property type="entry name" value="Acetyl_CoA_COase_Trfase_b_su"/>
</dbReference>
<dbReference type="InterPro" id="IPR029045">
    <property type="entry name" value="ClpP/crotonase-like_dom_sf"/>
</dbReference>
<dbReference type="InterPro" id="IPR011762">
    <property type="entry name" value="COA_CT_N"/>
</dbReference>
<dbReference type="InterPro" id="IPR041010">
    <property type="entry name" value="Znf-ACC"/>
</dbReference>
<dbReference type="NCBIfam" id="TIGR00515">
    <property type="entry name" value="accD"/>
    <property type="match status" value="1"/>
</dbReference>
<dbReference type="PANTHER" id="PTHR42995">
    <property type="entry name" value="ACETYL-COENZYME A CARBOXYLASE CARBOXYL TRANSFERASE SUBUNIT BETA, CHLOROPLASTIC"/>
    <property type="match status" value="1"/>
</dbReference>
<dbReference type="PANTHER" id="PTHR42995:SF5">
    <property type="entry name" value="ACETYL-COENZYME A CARBOXYLASE CARBOXYL TRANSFERASE SUBUNIT BETA, CHLOROPLASTIC"/>
    <property type="match status" value="1"/>
</dbReference>
<dbReference type="Pfam" id="PF01039">
    <property type="entry name" value="Carboxyl_trans"/>
    <property type="match status" value="1"/>
</dbReference>
<dbReference type="Pfam" id="PF17848">
    <property type="entry name" value="Zn_ribbon_ACC"/>
    <property type="match status" value="1"/>
</dbReference>
<dbReference type="PRINTS" id="PR01070">
    <property type="entry name" value="ACCCTRFRASEB"/>
</dbReference>
<dbReference type="SUPFAM" id="SSF52096">
    <property type="entry name" value="ClpP/crotonase"/>
    <property type="match status" value="1"/>
</dbReference>
<dbReference type="PROSITE" id="PS50980">
    <property type="entry name" value="COA_CT_NTER"/>
    <property type="match status" value="1"/>
</dbReference>
<sequence length="285" mass="31702">MGLFKKRKYITVSSKNLDENNDVENQPTIPDGMWIKCSKCGKILYKSDVDDNFKVCPKCNAHLRMNARERIEFIIDEGTFIEFDKNMMAANPLEFPNYEAKIKSMQEKTGLKDGVVTGLGNINGYKTVIAVMDSNFMMGSMGSVVGEKITRAIEEATERKLPVIIFTTSGGARMQEGMFSLMQMAKTSAALAKHNEAGLLYVSVLTDPTTGGVTASFAMLGDIILAEPKTLIGFAGRRVIEQTINQKLPSDFQTSEFLFKHGFIDMIVERKELKVTLGNILRMHS</sequence>
<gene>
    <name evidence="1" type="primary">accD</name>
    <name type="ordered locus">CA_C3569</name>
</gene>
<name>ACCD_CLOAB</name>
<organism>
    <name type="scientific">Clostridium acetobutylicum (strain ATCC 824 / DSM 792 / JCM 1419 / IAM 19013 / LMG 5710 / NBRC 13948 / NRRL B-527 / VKM B-1787 / 2291 / W)</name>
    <dbReference type="NCBI Taxonomy" id="272562"/>
    <lineage>
        <taxon>Bacteria</taxon>
        <taxon>Bacillati</taxon>
        <taxon>Bacillota</taxon>
        <taxon>Clostridia</taxon>
        <taxon>Eubacteriales</taxon>
        <taxon>Clostridiaceae</taxon>
        <taxon>Clostridium</taxon>
    </lineage>
</organism>
<proteinExistence type="inferred from homology"/>